<sequence length="118" mass="13505">MTRVKRGNVARKRRNKILKLAKGFRGSHSTLFRTANQQVMKALRSAYRDRKKKKRDFRRLWITRINAASRQHGLSYSQLIGNLKKADIQLNRKMLAQLAVLDPASFGKVAELASQAKG</sequence>
<proteinExistence type="inferred from homology"/>
<accession>Q8YRL8</accession>
<reference key="1">
    <citation type="journal article" date="2001" name="DNA Res.">
        <title>Complete genomic sequence of the filamentous nitrogen-fixing cyanobacterium Anabaena sp. strain PCC 7120.</title>
        <authorList>
            <person name="Kaneko T."/>
            <person name="Nakamura Y."/>
            <person name="Wolk C.P."/>
            <person name="Kuritz T."/>
            <person name="Sasamoto S."/>
            <person name="Watanabe A."/>
            <person name="Iriguchi M."/>
            <person name="Ishikawa A."/>
            <person name="Kawashima K."/>
            <person name="Kimura T."/>
            <person name="Kishida Y."/>
            <person name="Kohara M."/>
            <person name="Matsumoto M."/>
            <person name="Matsuno A."/>
            <person name="Muraki A."/>
            <person name="Nakazaki N."/>
            <person name="Shimpo S."/>
            <person name="Sugimoto M."/>
            <person name="Takazawa M."/>
            <person name="Yamada M."/>
            <person name="Yasuda M."/>
            <person name="Tabata S."/>
        </authorList>
    </citation>
    <scope>NUCLEOTIDE SEQUENCE [LARGE SCALE GENOMIC DNA]</scope>
    <source>
        <strain>PCC 7120 / SAG 25.82 / UTEX 2576</strain>
    </source>
</reference>
<feature type="chain" id="PRO_0000177108" description="Large ribosomal subunit protein bL20">
    <location>
        <begin position="1"/>
        <end position="118"/>
    </location>
</feature>
<name>RL20_NOSS1</name>
<keyword id="KW-1185">Reference proteome</keyword>
<keyword id="KW-0687">Ribonucleoprotein</keyword>
<keyword id="KW-0689">Ribosomal protein</keyword>
<keyword id="KW-0694">RNA-binding</keyword>
<keyword id="KW-0699">rRNA-binding</keyword>
<gene>
    <name evidence="1" type="primary">rplT</name>
    <name evidence="1" type="synonym">rpl20</name>
    <name type="ordered locus">alr3428</name>
</gene>
<evidence type="ECO:0000255" key="1">
    <source>
        <dbReference type="HAMAP-Rule" id="MF_00382"/>
    </source>
</evidence>
<evidence type="ECO:0000305" key="2"/>
<organism>
    <name type="scientific">Nostoc sp. (strain PCC 7120 / SAG 25.82 / UTEX 2576)</name>
    <dbReference type="NCBI Taxonomy" id="103690"/>
    <lineage>
        <taxon>Bacteria</taxon>
        <taxon>Bacillati</taxon>
        <taxon>Cyanobacteriota</taxon>
        <taxon>Cyanophyceae</taxon>
        <taxon>Nostocales</taxon>
        <taxon>Nostocaceae</taxon>
        <taxon>Nostoc</taxon>
    </lineage>
</organism>
<dbReference type="EMBL" id="BA000019">
    <property type="protein sequence ID" value="BAB75127.1"/>
    <property type="molecule type" value="Genomic_DNA"/>
</dbReference>
<dbReference type="PIR" id="AE2234">
    <property type="entry name" value="AE2234"/>
</dbReference>
<dbReference type="RefSeq" id="WP_010997578.1">
    <property type="nucleotide sequence ID" value="NZ_RSCN01000015.1"/>
</dbReference>
<dbReference type="SMR" id="Q8YRL8"/>
<dbReference type="STRING" id="103690.gene:10495467"/>
<dbReference type="KEGG" id="ana:alr3428"/>
<dbReference type="eggNOG" id="COG0292">
    <property type="taxonomic scope" value="Bacteria"/>
</dbReference>
<dbReference type="OrthoDB" id="9808966at2"/>
<dbReference type="Proteomes" id="UP000002483">
    <property type="component" value="Chromosome"/>
</dbReference>
<dbReference type="GO" id="GO:1990904">
    <property type="term" value="C:ribonucleoprotein complex"/>
    <property type="evidence" value="ECO:0007669"/>
    <property type="project" value="UniProtKB-KW"/>
</dbReference>
<dbReference type="GO" id="GO:0005840">
    <property type="term" value="C:ribosome"/>
    <property type="evidence" value="ECO:0007669"/>
    <property type="project" value="UniProtKB-KW"/>
</dbReference>
<dbReference type="GO" id="GO:0019843">
    <property type="term" value="F:rRNA binding"/>
    <property type="evidence" value="ECO:0007669"/>
    <property type="project" value="UniProtKB-UniRule"/>
</dbReference>
<dbReference type="GO" id="GO:0003735">
    <property type="term" value="F:structural constituent of ribosome"/>
    <property type="evidence" value="ECO:0007669"/>
    <property type="project" value="InterPro"/>
</dbReference>
<dbReference type="GO" id="GO:0000027">
    <property type="term" value="P:ribosomal large subunit assembly"/>
    <property type="evidence" value="ECO:0007669"/>
    <property type="project" value="UniProtKB-UniRule"/>
</dbReference>
<dbReference type="GO" id="GO:0006412">
    <property type="term" value="P:translation"/>
    <property type="evidence" value="ECO:0007669"/>
    <property type="project" value="InterPro"/>
</dbReference>
<dbReference type="CDD" id="cd07026">
    <property type="entry name" value="Ribosomal_L20"/>
    <property type="match status" value="1"/>
</dbReference>
<dbReference type="FunFam" id="1.10.1900.20:FF:000001">
    <property type="entry name" value="50S ribosomal protein L20"/>
    <property type="match status" value="1"/>
</dbReference>
<dbReference type="Gene3D" id="6.10.160.10">
    <property type="match status" value="1"/>
</dbReference>
<dbReference type="Gene3D" id="1.10.1900.20">
    <property type="entry name" value="Ribosomal protein L20"/>
    <property type="match status" value="1"/>
</dbReference>
<dbReference type="HAMAP" id="MF_00382">
    <property type="entry name" value="Ribosomal_bL20"/>
    <property type="match status" value="1"/>
</dbReference>
<dbReference type="InterPro" id="IPR005813">
    <property type="entry name" value="Ribosomal_bL20"/>
</dbReference>
<dbReference type="InterPro" id="IPR049946">
    <property type="entry name" value="RIBOSOMAL_L20_CS"/>
</dbReference>
<dbReference type="InterPro" id="IPR035566">
    <property type="entry name" value="Ribosomal_protein_bL20_C"/>
</dbReference>
<dbReference type="NCBIfam" id="TIGR01032">
    <property type="entry name" value="rplT_bact"/>
    <property type="match status" value="1"/>
</dbReference>
<dbReference type="PANTHER" id="PTHR10986">
    <property type="entry name" value="39S RIBOSOMAL PROTEIN L20"/>
    <property type="match status" value="1"/>
</dbReference>
<dbReference type="Pfam" id="PF00453">
    <property type="entry name" value="Ribosomal_L20"/>
    <property type="match status" value="1"/>
</dbReference>
<dbReference type="PRINTS" id="PR00062">
    <property type="entry name" value="RIBOSOMALL20"/>
</dbReference>
<dbReference type="SUPFAM" id="SSF74731">
    <property type="entry name" value="Ribosomal protein L20"/>
    <property type="match status" value="1"/>
</dbReference>
<dbReference type="PROSITE" id="PS00937">
    <property type="entry name" value="RIBOSOMAL_L20"/>
    <property type="match status" value="1"/>
</dbReference>
<protein>
    <recommendedName>
        <fullName evidence="1">Large ribosomal subunit protein bL20</fullName>
    </recommendedName>
    <alternativeName>
        <fullName evidence="2">50S ribosomal protein L20</fullName>
    </alternativeName>
</protein>
<comment type="function">
    <text evidence="1">Binds directly to 23S ribosomal RNA and is necessary for the in vitro assembly process of the 50S ribosomal subunit. It is not involved in the protein synthesizing functions of that subunit.</text>
</comment>
<comment type="similarity">
    <text evidence="1">Belongs to the bacterial ribosomal protein bL20 family.</text>
</comment>